<dbReference type="EMBL" id="AE017197">
    <property type="protein sequence ID" value="AAU03612.1"/>
    <property type="molecule type" value="Genomic_DNA"/>
</dbReference>
<dbReference type="RefSeq" id="WP_011190599.1">
    <property type="nucleotide sequence ID" value="NC_006142.1"/>
</dbReference>
<dbReference type="SMR" id="Q68XN0"/>
<dbReference type="KEGG" id="rty:RT0127"/>
<dbReference type="eggNOG" id="COG0244">
    <property type="taxonomic scope" value="Bacteria"/>
</dbReference>
<dbReference type="HOGENOM" id="CLU_092227_0_0_5"/>
<dbReference type="OrthoDB" id="9791972at2"/>
<dbReference type="Proteomes" id="UP000000604">
    <property type="component" value="Chromosome"/>
</dbReference>
<dbReference type="GO" id="GO:0015934">
    <property type="term" value="C:large ribosomal subunit"/>
    <property type="evidence" value="ECO:0007669"/>
    <property type="project" value="InterPro"/>
</dbReference>
<dbReference type="GO" id="GO:0070180">
    <property type="term" value="F:large ribosomal subunit rRNA binding"/>
    <property type="evidence" value="ECO:0007669"/>
    <property type="project" value="UniProtKB-UniRule"/>
</dbReference>
<dbReference type="GO" id="GO:0003735">
    <property type="term" value="F:structural constituent of ribosome"/>
    <property type="evidence" value="ECO:0007669"/>
    <property type="project" value="InterPro"/>
</dbReference>
<dbReference type="GO" id="GO:0006412">
    <property type="term" value="P:translation"/>
    <property type="evidence" value="ECO:0007669"/>
    <property type="project" value="UniProtKB-UniRule"/>
</dbReference>
<dbReference type="CDD" id="cd05797">
    <property type="entry name" value="Ribosomal_L10"/>
    <property type="match status" value="1"/>
</dbReference>
<dbReference type="Gene3D" id="3.30.70.1730">
    <property type="match status" value="1"/>
</dbReference>
<dbReference type="Gene3D" id="6.10.250.290">
    <property type="match status" value="1"/>
</dbReference>
<dbReference type="HAMAP" id="MF_00362">
    <property type="entry name" value="Ribosomal_uL10"/>
    <property type="match status" value="1"/>
</dbReference>
<dbReference type="InterPro" id="IPR001790">
    <property type="entry name" value="Ribosomal_uL10"/>
</dbReference>
<dbReference type="InterPro" id="IPR043141">
    <property type="entry name" value="Ribosomal_uL10-like_sf"/>
</dbReference>
<dbReference type="InterPro" id="IPR022973">
    <property type="entry name" value="Ribosomal_uL10_bac"/>
</dbReference>
<dbReference type="InterPro" id="IPR047865">
    <property type="entry name" value="Ribosomal_uL10_bac_type"/>
</dbReference>
<dbReference type="InterPro" id="IPR002363">
    <property type="entry name" value="Ribosomal_uL10_CS_bac"/>
</dbReference>
<dbReference type="NCBIfam" id="NF000955">
    <property type="entry name" value="PRK00099.1-1"/>
    <property type="match status" value="1"/>
</dbReference>
<dbReference type="PANTHER" id="PTHR11560">
    <property type="entry name" value="39S RIBOSOMAL PROTEIN L10, MITOCHONDRIAL"/>
    <property type="match status" value="1"/>
</dbReference>
<dbReference type="Pfam" id="PF00466">
    <property type="entry name" value="Ribosomal_L10"/>
    <property type="match status" value="1"/>
</dbReference>
<dbReference type="SUPFAM" id="SSF160369">
    <property type="entry name" value="Ribosomal protein L10-like"/>
    <property type="match status" value="1"/>
</dbReference>
<dbReference type="PROSITE" id="PS01109">
    <property type="entry name" value="RIBOSOMAL_L10"/>
    <property type="match status" value="1"/>
</dbReference>
<feature type="chain" id="PRO_0000154699" description="Large ribosomal subunit protein uL10">
    <location>
        <begin position="1"/>
        <end position="169"/>
    </location>
</feature>
<reference key="1">
    <citation type="journal article" date="2004" name="J. Bacteriol.">
        <title>Complete genome sequence of Rickettsia typhi and comparison with sequences of other Rickettsiae.</title>
        <authorList>
            <person name="McLeod M.P."/>
            <person name="Qin X."/>
            <person name="Karpathy S.E."/>
            <person name="Gioia J."/>
            <person name="Highlander S.K."/>
            <person name="Fox G.E."/>
            <person name="McNeill T.Z."/>
            <person name="Jiang H."/>
            <person name="Muzny D."/>
            <person name="Jacob L.S."/>
            <person name="Hawes A.C."/>
            <person name="Sodergren E."/>
            <person name="Gill R."/>
            <person name="Hume J."/>
            <person name="Morgan M."/>
            <person name="Fan G."/>
            <person name="Amin A.G."/>
            <person name="Gibbs R.A."/>
            <person name="Hong C."/>
            <person name="Yu X.-J."/>
            <person name="Walker D.H."/>
            <person name="Weinstock G.M."/>
        </authorList>
    </citation>
    <scope>NUCLEOTIDE SEQUENCE [LARGE SCALE GENOMIC DNA]</scope>
    <source>
        <strain>ATCC VR-144 / Wilmington</strain>
    </source>
</reference>
<proteinExistence type="inferred from homology"/>
<protein>
    <recommendedName>
        <fullName evidence="1">Large ribosomal subunit protein uL10</fullName>
    </recommendedName>
    <alternativeName>
        <fullName evidence="2">50S ribosomal protein L10</fullName>
    </alternativeName>
</protein>
<comment type="function">
    <text evidence="1">Forms part of the ribosomal stalk, playing a central role in the interaction of the ribosome with GTP-bound translation factors.</text>
</comment>
<comment type="subunit">
    <text evidence="1">Part of the ribosomal stalk of the 50S ribosomal subunit. The N-terminus interacts with L11 and the large rRNA to form the base of the stalk. The C-terminus forms an elongated spine to which L12 dimers bind in a sequential fashion forming a multimeric L10(L12)X complex.</text>
</comment>
<comment type="similarity">
    <text evidence="1">Belongs to the universal ribosomal protein uL10 family.</text>
</comment>
<accession>Q68XN0</accession>
<gene>
    <name evidence="1" type="primary">rplJ</name>
    <name type="ordered locus">RT0127</name>
</gene>
<sequence length="169" mass="18248">MLRSEKPVAVEDIVNIYKESPSVIITHYHGLTVSQVSSLREALKSKEVGFKVVKNTLAKIAAKHTGLDSITDLFAGPSAIVYSKEPVEMARLVVNFANSNDNLKIIGGIVDNHILDTYAIKELAKLPSLHELRGKIVGLLQAPATKVVGVLQATSSSIARVIHAHAIKH</sequence>
<evidence type="ECO:0000255" key="1">
    <source>
        <dbReference type="HAMAP-Rule" id="MF_00362"/>
    </source>
</evidence>
<evidence type="ECO:0000305" key="2"/>
<keyword id="KW-0687">Ribonucleoprotein</keyword>
<keyword id="KW-0689">Ribosomal protein</keyword>
<keyword id="KW-0694">RNA-binding</keyword>
<keyword id="KW-0699">rRNA-binding</keyword>
<organism>
    <name type="scientific">Rickettsia typhi (strain ATCC VR-144 / Wilmington)</name>
    <dbReference type="NCBI Taxonomy" id="257363"/>
    <lineage>
        <taxon>Bacteria</taxon>
        <taxon>Pseudomonadati</taxon>
        <taxon>Pseudomonadota</taxon>
        <taxon>Alphaproteobacteria</taxon>
        <taxon>Rickettsiales</taxon>
        <taxon>Rickettsiaceae</taxon>
        <taxon>Rickettsieae</taxon>
        <taxon>Rickettsia</taxon>
        <taxon>typhus group</taxon>
    </lineage>
</organism>
<name>RL10_RICTY</name>